<name>GSG7_ANOST</name>
<dbReference type="EMBL" id="AB284502">
    <property type="protein sequence ID" value="BAF62634.1"/>
    <property type="molecule type" value="mRNA"/>
</dbReference>
<dbReference type="RefSeq" id="XP_035915606.1">
    <property type="nucleotide sequence ID" value="XM_036059713.1"/>
</dbReference>
<dbReference type="PDB" id="6XMB">
    <property type="method" value="X-ray"/>
    <property type="resolution" value="2.31 A"/>
    <property type="chains" value="A/B/C=23-142"/>
</dbReference>
<dbReference type="PDBsum" id="6XMB"/>
<dbReference type="SMR" id="A5HUP6"/>
<dbReference type="EnsemblMetazoa" id="ASTEI03054-RA">
    <property type="protein sequence ID" value="ASTEI03054-PA"/>
    <property type="gene ID" value="ASTEI03054"/>
</dbReference>
<dbReference type="GeneID" id="118513646"/>
<dbReference type="VEuPathDB" id="VectorBase:ASTE016225"/>
<dbReference type="VEuPathDB" id="VectorBase:ASTEI03054"/>
<dbReference type="VEuPathDB" id="VectorBase:ASTEI20_037963"/>
<dbReference type="OMA" id="NCHDHDQ"/>
<dbReference type="OrthoDB" id="7719128at2759"/>
<dbReference type="Proteomes" id="UP000076408">
    <property type="component" value="Unassembled WGS sequence"/>
</dbReference>
<dbReference type="GO" id="GO:0005576">
    <property type="term" value="C:extracellular region"/>
    <property type="evidence" value="ECO:0007669"/>
    <property type="project" value="UniProtKB-SubCell"/>
</dbReference>
<dbReference type="GO" id="GO:0090729">
    <property type="term" value="F:toxin activity"/>
    <property type="evidence" value="ECO:0007669"/>
    <property type="project" value="UniProtKB-KW"/>
</dbReference>
<dbReference type="InterPro" id="IPR056799">
    <property type="entry name" value="ALL3/gSG7_salivary-like_helix"/>
</dbReference>
<dbReference type="Pfam" id="PF25001">
    <property type="entry name" value="Aegyptin_C"/>
    <property type="match status" value="1"/>
</dbReference>
<protein>
    <recommendedName>
        <fullName evidence="1">gSG7 salivary protein</fullName>
    </recommendedName>
    <alternativeName>
        <fullName evidence="5 6">Anophensin</fullName>
    </alternativeName>
</protein>
<reference evidence="8" key="1">
    <citation type="journal article" date="2007" name="Insect Biochem. Mol. Biol.">
        <title>Identification and characterization of a new kallikrein-kinin system inhibitor from the salivary glands of the malaria vector mosquito Anopheles stephensi.</title>
        <authorList>
            <person name="Isawa H."/>
            <person name="Orito Y."/>
            <person name="Iwanaga S."/>
            <person name="Jingushi N."/>
            <person name="Morita A."/>
            <person name="Chinzei Y."/>
            <person name="Yuda M."/>
        </authorList>
    </citation>
    <scope>NUCLEOTIDE SEQUENCE [MRNA]</scope>
    <scope>FUNCTION</scope>
    <scope>ACTIVITY REGULATION</scope>
    <scope>INTERACTION WITH HOST F12 AND KNG1</scope>
    <source>
        <tissue evidence="8">Salivary gland</tissue>
    </source>
</reference>
<reference evidence="9" key="2">
    <citation type="journal article" date="2014" name="Genome Biol.">
        <title>Genome analysis of a major urban malaria vector mosquito, Anopheles stephensi.</title>
        <authorList>
            <person name="Jiang X."/>
            <person name="Peery A."/>
            <person name="Hall A.B."/>
            <person name="Sharma A."/>
            <person name="Chen X.G."/>
            <person name="Waterhouse R.M."/>
            <person name="Komissarov A."/>
            <person name="Riehle M.M."/>
            <person name="Shouche Y."/>
            <person name="Sharakhova M.V."/>
            <person name="Lawson D."/>
            <person name="Pakpour N."/>
            <person name="Arensburger P."/>
            <person name="Davidson V.L."/>
            <person name="Eiglmeier K."/>
            <person name="Emrich S."/>
            <person name="George P."/>
            <person name="Kennedy R.C."/>
            <person name="Mane S.P."/>
            <person name="Maslen G."/>
            <person name="Oringanje C."/>
            <person name="Qi Y."/>
            <person name="Settlage R."/>
            <person name="Tojo M."/>
            <person name="Tubio J.M."/>
            <person name="Unger M.F."/>
            <person name="Wang B."/>
            <person name="Vernick K.D."/>
            <person name="Ribeiro J.M."/>
            <person name="James A.A."/>
            <person name="Michel K."/>
            <person name="Riehle M.A."/>
            <person name="Luckhart S."/>
            <person name="Sharakhov I.V."/>
            <person name="Tu Z."/>
        </authorList>
    </citation>
    <scope>NUCLEOTIDE SEQUENCE [LARGE SCALE GENOMIC DNA]</scope>
    <source>
        <strain evidence="9">Indian</strain>
    </source>
</reference>
<reference evidence="10" key="3">
    <citation type="journal article" date="2021" name="J. Biol. Chem.">
        <title>Salivary complement inhibitors from mosquitoes: Structure and mechanism of action.</title>
        <authorList>
            <person name="Strayer E.C."/>
            <person name="Lu S."/>
            <person name="Ribeiro J."/>
            <person name="Andersen J.F."/>
        </authorList>
    </citation>
    <scope>X-RAY CRYSTALLOGRAPHY (2.31 ANGSTROMS) OF 23-142</scope>
    <scope>FUNCTION</scope>
    <scope>DISULFIDE BONDS</scope>
</reference>
<comment type="function">
    <text evidence="3 4">Salivary protein with anticoagulant activity (PubMed:17456441). Inhibits activation of host kallikrein-kinin system by preventing the reciprocal activation of coagulation factor XII (F12) and prekallikrein (KLKB1), and subsequent release of bradykinin (PubMed:17456441). Inhibits host factor XII and high molecular weight kininogen (KNG1) binding to negatively charged surfaces (PubMed:17456441). Weakly inhibits the alternative pathway of complement system activation in the host (PubMed:33199367).</text>
</comment>
<comment type="activity regulation">
    <text evidence="3">Zn(2+) modulates binding to host coagulation factor XII (F12) and high molecular weight kininogen (KNG1).</text>
</comment>
<comment type="subunit">
    <text evidence="3">Interacts with host coagulation factor XII (F12) (inactive and activated) (PubMed:17456441). Interacts with host high molecular weight kininogen (KNG1) (inactive and activated) (PubMed:17456441).</text>
</comment>
<comment type="subcellular location">
    <subcellularLocation>
        <location evidence="7">Secreted</location>
    </subcellularLocation>
</comment>
<sequence length="142" mass="16087">METKLVLALIACGVICLLQTTPTEATGKHVQQLMKVFRAIDFDFTKKAFYLHRAKYGVQNQLRNPLYLKAMSLPRSAKLSQPCLKKMIDEVNDLESTFYAGFSFNCHDHDQYSMDCLEAAEPTYLDGLKKLAASTEQCLVQK</sequence>
<feature type="signal peptide" evidence="2">
    <location>
        <begin position="1"/>
        <end position="25"/>
    </location>
</feature>
<feature type="chain" id="PRO_5002683439" description="gSG7 salivary protein" evidence="2">
    <location>
        <begin position="26"/>
        <end position="142"/>
    </location>
</feature>
<feature type="disulfide bond" evidence="4 10">
    <location>
        <begin position="83"/>
        <end position="138"/>
    </location>
</feature>
<feature type="disulfide bond" evidence="4 10">
    <location>
        <begin position="106"/>
        <end position="116"/>
    </location>
</feature>
<feature type="sequence conflict" description="In Ref. 1; BAF62634." evidence="7" ref="1">
    <original>G</original>
    <variation>R</variation>
    <location>
        <position position="27"/>
    </location>
</feature>
<feature type="sequence conflict" description="In Ref. 1; BAF62634." evidence="7" ref="1">
    <original>K</original>
    <variation>N</variation>
    <location>
        <position position="85"/>
    </location>
</feature>
<feature type="helix" evidence="11">
    <location>
        <begin position="28"/>
        <end position="61"/>
    </location>
</feature>
<feature type="helix" evidence="11">
    <location>
        <begin position="63"/>
        <end position="71"/>
    </location>
</feature>
<feature type="helix" evidence="11">
    <location>
        <begin position="81"/>
        <end position="102"/>
    </location>
</feature>
<feature type="turn" evidence="11">
    <location>
        <begin position="103"/>
        <end position="105"/>
    </location>
</feature>
<feature type="helix" evidence="11">
    <location>
        <begin position="114"/>
        <end position="138"/>
    </location>
</feature>
<proteinExistence type="evidence at protein level"/>
<evidence type="ECO:0000250" key="1">
    <source>
        <dbReference type="UniProtKB" id="A0A1Y9G8D0"/>
    </source>
</evidence>
<evidence type="ECO:0000255" key="2"/>
<evidence type="ECO:0000269" key="3">
    <source>
    </source>
</evidence>
<evidence type="ECO:0000269" key="4">
    <source>
    </source>
</evidence>
<evidence type="ECO:0000303" key="5">
    <source>
    </source>
</evidence>
<evidence type="ECO:0000303" key="6">
    <source>
    </source>
</evidence>
<evidence type="ECO:0000305" key="7"/>
<evidence type="ECO:0000312" key="8">
    <source>
        <dbReference type="EMBL" id="BAF62634.1"/>
    </source>
</evidence>
<evidence type="ECO:0000312" key="9">
    <source>
        <dbReference type="Proteomes" id="UP000076408"/>
    </source>
</evidence>
<evidence type="ECO:0007744" key="10">
    <source>
        <dbReference type="PDB" id="6XMB"/>
    </source>
</evidence>
<evidence type="ECO:0007829" key="11">
    <source>
        <dbReference type="PDB" id="6XMB"/>
    </source>
</evidence>
<accession>A5HUP6</accession>
<accession>A0A182Y3L8</accession>
<organism evidence="8">
    <name type="scientific">Anopheles stephensi</name>
    <name type="common">Indo-Pakistan malaria mosquito</name>
    <dbReference type="NCBI Taxonomy" id="30069"/>
    <lineage>
        <taxon>Eukaryota</taxon>
        <taxon>Metazoa</taxon>
        <taxon>Ecdysozoa</taxon>
        <taxon>Arthropoda</taxon>
        <taxon>Hexapoda</taxon>
        <taxon>Insecta</taxon>
        <taxon>Pterygota</taxon>
        <taxon>Neoptera</taxon>
        <taxon>Endopterygota</taxon>
        <taxon>Diptera</taxon>
        <taxon>Nematocera</taxon>
        <taxon>Culicoidea</taxon>
        <taxon>Culicidae</taxon>
        <taxon>Anophelinae</taxon>
        <taxon>Anopheles</taxon>
    </lineage>
</organism>
<keyword id="KW-0002">3D-structure</keyword>
<keyword id="KW-1203">Blood coagulation cascade inhibiting toxin</keyword>
<keyword id="KW-1216">Complement system impairing toxin</keyword>
<keyword id="KW-1015">Disulfide bond</keyword>
<keyword id="KW-1199">Hemostasis impairing toxin</keyword>
<keyword id="KW-1185">Reference proteome</keyword>
<keyword id="KW-0964">Secreted</keyword>
<keyword id="KW-0732">Signal</keyword>
<keyword id="KW-0800">Toxin</keyword>